<gene>
    <name type="primary">LAC10</name>
    <name type="ordered locus">Os03g0273200</name>
    <name type="ordered locus">LOC_Os03g16610</name>
    <name type="ORF">OsJ_009911</name>
    <name evidence="4" type="ORF">OsJ_10313</name>
</gene>
<protein>
    <recommendedName>
        <fullName>Laccase-10</fullName>
        <ecNumber>1.10.3.2</ecNumber>
    </recommendedName>
    <alternativeName>
        <fullName>Benzenediol:oxygen oxidoreductase 10</fullName>
    </alternativeName>
    <alternativeName>
        <fullName>Diphenol oxidase 10</fullName>
    </alternativeName>
    <alternativeName>
        <fullName>Urishiol oxidase 10</fullName>
    </alternativeName>
</protein>
<comment type="function">
    <text evidence="1">Lignin degradation and detoxification of lignin-derived products.</text>
</comment>
<comment type="catalytic activity">
    <reaction>
        <text>4 hydroquinone + O2 = 4 benzosemiquinone + 2 H2O</text>
        <dbReference type="Rhea" id="RHEA:11276"/>
        <dbReference type="ChEBI" id="CHEBI:15377"/>
        <dbReference type="ChEBI" id="CHEBI:15379"/>
        <dbReference type="ChEBI" id="CHEBI:17594"/>
        <dbReference type="ChEBI" id="CHEBI:17977"/>
        <dbReference type="EC" id="1.10.3.2"/>
    </reaction>
</comment>
<comment type="cofactor">
    <cofactor evidence="1">
        <name>Cu cation</name>
        <dbReference type="ChEBI" id="CHEBI:23378"/>
    </cofactor>
    <text evidence="1">Binds 4 Cu cations per monomer.</text>
</comment>
<comment type="subcellular location">
    <subcellularLocation>
        <location evidence="3">Secreted</location>
        <location evidence="3">Extracellular space</location>
        <location evidence="3">Apoplast</location>
    </subcellularLocation>
</comment>
<comment type="similarity">
    <text evidence="3">Belongs to the multicopper oxidase family.</text>
</comment>
<dbReference type="EC" id="1.10.3.2"/>
<dbReference type="EMBL" id="DP000009">
    <property type="protein sequence ID" value="ABF95230.1"/>
    <property type="molecule type" value="Genomic_DNA"/>
</dbReference>
<dbReference type="EMBL" id="AP008209">
    <property type="protein sequence ID" value="BAF11613.1"/>
    <property type="molecule type" value="Genomic_DNA"/>
</dbReference>
<dbReference type="EMBL" id="AP014959">
    <property type="protein sequence ID" value="BAS83490.1"/>
    <property type="molecule type" value="Genomic_DNA"/>
</dbReference>
<dbReference type="EMBL" id="CM000140">
    <property type="protein sequence ID" value="EEE58784.1"/>
    <property type="molecule type" value="Genomic_DNA"/>
</dbReference>
<dbReference type="EMBL" id="AK060579">
    <property type="protein sequence ID" value="BAG87502.1"/>
    <property type="molecule type" value="mRNA"/>
</dbReference>
<dbReference type="EMBL" id="AK072397">
    <property type="protein sequence ID" value="BAG92951.1"/>
    <property type="molecule type" value="mRNA"/>
</dbReference>
<dbReference type="RefSeq" id="XP_015628787.1">
    <property type="nucleotide sequence ID" value="XM_015773301.1"/>
</dbReference>
<dbReference type="SMR" id="Q10ND7"/>
<dbReference type="STRING" id="39947.Q10ND7"/>
<dbReference type="GlyCosmos" id="Q10ND7">
    <property type="glycosylation" value="16 sites, No reported glycans"/>
</dbReference>
<dbReference type="PaxDb" id="39947-Q10ND7"/>
<dbReference type="EnsemblPlants" id="Os03t0273200-01">
    <property type="protein sequence ID" value="Os03t0273200-01"/>
    <property type="gene ID" value="Os03g0273200"/>
</dbReference>
<dbReference type="EnsemblPlants" id="Os03t0273200-02">
    <property type="protein sequence ID" value="Os03t0273200-02"/>
    <property type="gene ID" value="Os03g0273200"/>
</dbReference>
<dbReference type="Gramene" id="Os03t0273200-01">
    <property type="protein sequence ID" value="Os03t0273200-01"/>
    <property type="gene ID" value="Os03g0273200"/>
</dbReference>
<dbReference type="Gramene" id="Os03t0273200-02">
    <property type="protein sequence ID" value="Os03t0273200-02"/>
    <property type="gene ID" value="Os03g0273200"/>
</dbReference>
<dbReference type="KEGG" id="dosa:Os03g0273200"/>
<dbReference type="eggNOG" id="KOG1263">
    <property type="taxonomic scope" value="Eukaryota"/>
</dbReference>
<dbReference type="HOGENOM" id="CLU_006504_6_3_1"/>
<dbReference type="InParanoid" id="Q10ND7"/>
<dbReference type="OMA" id="CNTRAIP"/>
<dbReference type="OrthoDB" id="2121828at2759"/>
<dbReference type="Proteomes" id="UP000000763">
    <property type="component" value="Chromosome 3"/>
</dbReference>
<dbReference type="Proteomes" id="UP000007752">
    <property type="component" value="Chromosome 3"/>
</dbReference>
<dbReference type="Proteomes" id="UP000059680">
    <property type="component" value="Chromosome 3"/>
</dbReference>
<dbReference type="GO" id="GO:0048046">
    <property type="term" value="C:apoplast"/>
    <property type="evidence" value="ECO:0007669"/>
    <property type="project" value="UniProtKB-SubCell"/>
</dbReference>
<dbReference type="GO" id="GO:0005507">
    <property type="term" value="F:copper ion binding"/>
    <property type="evidence" value="ECO:0007669"/>
    <property type="project" value="InterPro"/>
</dbReference>
<dbReference type="GO" id="GO:0052716">
    <property type="term" value="F:hydroquinone:oxygen oxidoreductase activity"/>
    <property type="evidence" value="ECO:0007669"/>
    <property type="project" value="UniProtKB-EC"/>
</dbReference>
<dbReference type="GO" id="GO:0016491">
    <property type="term" value="F:oxidoreductase activity"/>
    <property type="evidence" value="ECO:0000318"/>
    <property type="project" value="GO_Central"/>
</dbReference>
<dbReference type="GO" id="GO:0046274">
    <property type="term" value="P:lignin catabolic process"/>
    <property type="evidence" value="ECO:0007669"/>
    <property type="project" value="UniProtKB-KW"/>
</dbReference>
<dbReference type="CDD" id="cd13849">
    <property type="entry name" value="CuRO_1_LCC_plant"/>
    <property type="match status" value="1"/>
</dbReference>
<dbReference type="CDD" id="cd13875">
    <property type="entry name" value="CuRO_2_LCC_plant"/>
    <property type="match status" value="1"/>
</dbReference>
<dbReference type="CDD" id="cd13897">
    <property type="entry name" value="CuRO_3_LCC_plant"/>
    <property type="match status" value="1"/>
</dbReference>
<dbReference type="FunFam" id="2.60.40.420:FF:000049">
    <property type="entry name" value="Laccase"/>
    <property type="match status" value="1"/>
</dbReference>
<dbReference type="FunFam" id="2.60.40.420:FF:000062">
    <property type="entry name" value="Laccase"/>
    <property type="match status" value="1"/>
</dbReference>
<dbReference type="Gene3D" id="2.60.40.420">
    <property type="entry name" value="Cupredoxins - blue copper proteins"/>
    <property type="match status" value="3"/>
</dbReference>
<dbReference type="InterPro" id="IPR011707">
    <property type="entry name" value="Cu-oxidase-like_N"/>
</dbReference>
<dbReference type="InterPro" id="IPR001117">
    <property type="entry name" value="Cu-oxidase_2nd"/>
</dbReference>
<dbReference type="InterPro" id="IPR011706">
    <property type="entry name" value="Cu-oxidase_C"/>
</dbReference>
<dbReference type="InterPro" id="IPR045087">
    <property type="entry name" value="Cu-oxidase_fam"/>
</dbReference>
<dbReference type="InterPro" id="IPR033138">
    <property type="entry name" value="Cu_oxidase_CS"/>
</dbReference>
<dbReference type="InterPro" id="IPR002355">
    <property type="entry name" value="Cu_oxidase_Cu_BS"/>
</dbReference>
<dbReference type="InterPro" id="IPR008972">
    <property type="entry name" value="Cupredoxin"/>
</dbReference>
<dbReference type="InterPro" id="IPR034288">
    <property type="entry name" value="CuRO_1_LCC"/>
</dbReference>
<dbReference type="InterPro" id="IPR034285">
    <property type="entry name" value="CuRO_2_LCC"/>
</dbReference>
<dbReference type="InterPro" id="IPR034289">
    <property type="entry name" value="CuRO_3_LCC"/>
</dbReference>
<dbReference type="InterPro" id="IPR017761">
    <property type="entry name" value="Laccase"/>
</dbReference>
<dbReference type="NCBIfam" id="TIGR03389">
    <property type="entry name" value="laccase"/>
    <property type="match status" value="1"/>
</dbReference>
<dbReference type="PANTHER" id="PTHR11709:SF521">
    <property type="entry name" value="LACCASE-10"/>
    <property type="match status" value="1"/>
</dbReference>
<dbReference type="PANTHER" id="PTHR11709">
    <property type="entry name" value="MULTI-COPPER OXIDASE"/>
    <property type="match status" value="1"/>
</dbReference>
<dbReference type="Pfam" id="PF00394">
    <property type="entry name" value="Cu-oxidase"/>
    <property type="match status" value="1"/>
</dbReference>
<dbReference type="Pfam" id="PF07731">
    <property type="entry name" value="Cu-oxidase_2"/>
    <property type="match status" value="1"/>
</dbReference>
<dbReference type="Pfam" id="PF07732">
    <property type="entry name" value="Cu-oxidase_3"/>
    <property type="match status" value="1"/>
</dbReference>
<dbReference type="SUPFAM" id="SSF49503">
    <property type="entry name" value="Cupredoxins"/>
    <property type="match status" value="3"/>
</dbReference>
<dbReference type="PROSITE" id="PS00079">
    <property type="entry name" value="MULTICOPPER_OXIDASE1"/>
    <property type="match status" value="1"/>
</dbReference>
<dbReference type="PROSITE" id="PS00080">
    <property type="entry name" value="MULTICOPPER_OXIDASE2"/>
    <property type="match status" value="1"/>
</dbReference>
<feature type="signal peptide" evidence="2">
    <location>
        <begin position="1"/>
        <end position="29"/>
    </location>
</feature>
<feature type="chain" id="PRO_0000291895" description="Laccase-10">
    <location>
        <begin position="30"/>
        <end position="578"/>
    </location>
</feature>
<feature type="domain" description="Plastocyanin-like 1">
    <location>
        <begin position="37"/>
        <end position="153"/>
    </location>
</feature>
<feature type="domain" description="Plastocyanin-like 2">
    <location>
        <begin position="163"/>
        <end position="319"/>
    </location>
</feature>
<feature type="domain" description="Plastocyanin-like 3">
    <location>
        <begin position="428"/>
        <end position="562"/>
    </location>
</feature>
<feature type="binding site" evidence="1">
    <location>
        <position position="87"/>
    </location>
    <ligand>
        <name>Cu cation</name>
        <dbReference type="ChEBI" id="CHEBI:23378"/>
        <label>1</label>
    </ligand>
</feature>
<feature type="binding site" evidence="1">
    <location>
        <position position="89"/>
    </location>
    <ligand>
        <name>Cu cation</name>
        <dbReference type="ChEBI" id="CHEBI:23378"/>
        <label>2</label>
    </ligand>
</feature>
<feature type="binding site" evidence="1">
    <location>
        <position position="132"/>
    </location>
    <ligand>
        <name>Cu cation</name>
        <dbReference type="ChEBI" id="CHEBI:23378"/>
        <label>2</label>
    </ligand>
</feature>
<feature type="binding site" evidence="1">
    <location>
        <position position="134"/>
    </location>
    <ligand>
        <name>Cu cation</name>
        <dbReference type="ChEBI" id="CHEBI:23378"/>
        <label>3</label>
    </ligand>
</feature>
<feature type="binding site" evidence="1">
    <location>
        <position position="479"/>
    </location>
    <ligand>
        <name>Cu cation</name>
        <dbReference type="ChEBI" id="CHEBI:23378"/>
        <label>4</label>
    </ligand>
</feature>
<feature type="binding site" evidence="1">
    <location>
        <position position="482"/>
    </location>
    <ligand>
        <name>Cu cation</name>
        <dbReference type="ChEBI" id="CHEBI:23378"/>
        <label>1</label>
    </ligand>
</feature>
<feature type="binding site" evidence="1">
    <location>
        <position position="484"/>
    </location>
    <ligand>
        <name>Cu cation</name>
        <dbReference type="ChEBI" id="CHEBI:23378"/>
        <label>3</label>
    </ligand>
</feature>
<feature type="binding site" evidence="1">
    <location>
        <position position="541"/>
    </location>
    <ligand>
        <name>Cu cation</name>
        <dbReference type="ChEBI" id="CHEBI:23378"/>
        <label>3</label>
    </ligand>
</feature>
<feature type="binding site" evidence="1">
    <location>
        <position position="542"/>
    </location>
    <ligand>
        <name>Cu cation</name>
        <dbReference type="ChEBI" id="CHEBI:23378"/>
        <label>4</label>
    </ligand>
</feature>
<feature type="binding site" evidence="1">
    <location>
        <position position="543"/>
    </location>
    <ligand>
        <name>Cu cation</name>
        <dbReference type="ChEBI" id="CHEBI:23378"/>
        <label>2</label>
    </ligand>
</feature>
<feature type="binding site" evidence="1">
    <location>
        <position position="547"/>
    </location>
    <ligand>
        <name>Cu cation</name>
        <dbReference type="ChEBI" id="CHEBI:23378"/>
        <label>4</label>
    </ligand>
</feature>
<feature type="glycosylation site" description="N-linked (GlcNAc...) asparagine" evidence="2">
    <location>
        <position position="42"/>
    </location>
</feature>
<feature type="glycosylation site" description="N-linked (GlcNAc...) asparagine" evidence="2">
    <location>
        <position position="83"/>
    </location>
</feature>
<feature type="glycosylation site" description="N-linked (GlcNAc...) asparagine" evidence="2">
    <location>
        <position position="119"/>
    </location>
</feature>
<feature type="glycosylation site" description="N-linked (GlcNAc...) asparagine" evidence="2">
    <location>
        <position position="192"/>
    </location>
</feature>
<feature type="glycosylation site" description="N-linked (GlcNAc...) asparagine" evidence="2">
    <location>
        <position position="208"/>
    </location>
</feature>
<feature type="glycosylation site" description="N-linked (GlcNAc...) asparagine" evidence="2">
    <location>
        <position position="244"/>
    </location>
</feature>
<feature type="glycosylation site" description="N-linked (GlcNAc...) asparagine" evidence="2">
    <location>
        <position position="307"/>
    </location>
</feature>
<feature type="glycosylation site" description="N-linked (GlcNAc...) asparagine" evidence="2">
    <location>
        <position position="336"/>
    </location>
</feature>
<feature type="glycosylation site" description="N-linked (GlcNAc...) asparagine" evidence="2">
    <location>
        <position position="384"/>
    </location>
</feature>
<feature type="glycosylation site" description="N-linked (GlcNAc...) asparagine" evidence="2">
    <location>
        <position position="392"/>
    </location>
</feature>
<feature type="glycosylation site" description="N-linked (GlcNAc...) asparagine" evidence="2">
    <location>
        <position position="402"/>
    </location>
</feature>
<feature type="glycosylation site" description="N-linked (GlcNAc...) asparagine" evidence="2">
    <location>
        <position position="438"/>
    </location>
</feature>
<feature type="glycosylation site" description="N-linked (GlcNAc...) asparagine" evidence="2">
    <location>
        <position position="445"/>
    </location>
</feature>
<feature type="glycosylation site" description="N-linked (GlcNAc...) asparagine" evidence="2">
    <location>
        <position position="448"/>
    </location>
</feature>
<feature type="glycosylation site" description="N-linked (GlcNAc...) asparagine" evidence="2">
    <location>
        <position position="451"/>
    </location>
</feature>
<feature type="glycosylation site" description="N-linked (GlcNAc...) asparagine" evidence="2">
    <location>
        <position position="461"/>
    </location>
</feature>
<reference key="1">
    <citation type="journal article" date="2005" name="Genome Res.">
        <title>Sequence, annotation, and analysis of synteny between rice chromosome 3 and diverged grass species.</title>
        <authorList>
            <consortium name="The rice chromosome 3 sequencing consortium"/>
            <person name="Buell C.R."/>
            <person name="Yuan Q."/>
            <person name="Ouyang S."/>
            <person name="Liu J."/>
            <person name="Zhu W."/>
            <person name="Wang A."/>
            <person name="Maiti R."/>
            <person name="Haas B."/>
            <person name="Wortman J."/>
            <person name="Pertea M."/>
            <person name="Jones K.M."/>
            <person name="Kim M."/>
            <person name="Overton L."/>
            <person name="Tsitrin T."/>
            <person name="Fadrosh D."/>
            <person name="Bera J."/>
            <person name="Weaver B."/>
            <person name="Jin S."/>
            <person name="Johri S."/>
            <person name="Reardon M."/>
            <person name="Webb K."/>
            <person name="Hill J."/>
            <person name="Moffat K."/>
            <person name="Tallon L."/>
            <person name="Van Aken S."/>
            <person name="Lewis M."/>
            <person name="Utterback T."/>
            <person name="Feldblyum T."/>
            <person name="Zismann V."/>
            <person name="Iobst S."/>
            <person name="Hsiao J."/>
            <person name="de Vazeille A.R."/>
            <person name="Salzberg S.L."/>
            <person name="White O."/>
            <person name="Fraser C.M."/>
            <person name="Yu Y."/>
            <person name="Kim H."/>
            <person name="Rambo T."/>
            <person name="Currie J."/>
            <person name="Collura K."/>
            <person name="Kernodle-Thompson S."/>
            <person name="Wei F."/>
            <person name="Kudrna K."/>
            <person name="Ammiraju J.S.S."/>
            <person name="Luo M."/>
            <person name="Goicoechea J.L."/>
            <person name="Wing R.A."/>
            <person name="Henry D."/>
            <person name="Oates R."/>
            <person name="Palmer M."/>
            <person name="Pries G."/>
            <person name="Saski C."/>
            <person name="Simmons J."/>
            <person name="Soderlund C."/>
            <person name="Nelson W."/>
            <person name="de la Bastide M."/>
            <person name="Spiegel L."/>
            <person name="Nascimento L."/>
            <person name="Huang E."/>
            <person name="Preston R."/>
            <person name="Zutavern T."/>
            <person name="Palmer L."/>
            <person name="O'Shaughnessy A."/>
            <person name="Dike S."/>
            <person name="McCombie W.R."/>
            <person name="Minx P."/>
            <person name="Cordum H."/>
            <person name="Wilson R."/>
            <person name="Jin W."/>
            <person name="Lee H.R."/>
            <person name="Jiang J."/>
            <person name="Jackson S."/>
        </authorList>
    </citation>
    <scope>NUCLEOTIDE SEQUENCE [LARGE SCALE GENOMIC DNA]</scope>
    <source>
        <strain>cv. Nipponbare</strain>
    </source>
</reference>
<reference key="2">
    <citation type="journal article" date="2005" name="Nature">
        <title>The map-based sequence of the rice genome.</title>
        <authorList>
            <consortium name="International rice genome sequencing project (IRGSP)"/>
        </authorList>
    </citation>
    <scope>NUCLEOTIDE SEQUENCE [LARGE SCALE GENOMIC DNA]</scope>
    <source>
        <strain>cv. Nipponbare</strain>
    </source>
</reference>
<reference key="3">
    <citation type="journal article" date="2008" name="Nucleic Acids Res.">
        <title>The rice annotation project database (RAP-DB): 2008 update.</title>
        <authorList>
            <consortium name="The rice annotation project (RAP)"/>
        </authorList>
    </citation>
    <scope>GENOME REANNOTATION</scope>
    <source>
        <strain>cv. Nipponbare</strain>
    </source>
</reference>
<reference key="4">
    <citation type="journal article" date="2013" name="Rice">
        <title>Improvement of the Oryza sativa Nipponbare reference genome using next generation sequence and optical map data.</title>
        <authorList>
            <person name="Kawahara Y."/>
            <person name="de la Bastide M."/>
            <person name="Hamilton J.P."/>
            <person name="Kanamori H."/>
            <person name="McCombie W.R."/>
            <person name="Ouyang S."/>
            <person name="Schwartz D.C."/>
            <person name="Tanaka T."/>
            <person name="Wu J."/>
            <person name="Zhou S."/>
            <person name="Childs K.L."/>
            <person name="Davidson R.M."/>
            <person name="Lin H."/>
            <person name="Quesada-Ocampo L."/>
            <person name="Vaillancourt B."/>
            <person name="Sakai H."/>
            <person name="Lee S.S."/>
            <person name="Kim J."/>
            <person name="Numa H."/>
            <person name="Itoh T."/>
            <person name="Buell C.R."/>
            <person name="Matsumoto T."/>
        </authorList>
    </citation>
    <scope>GENOME REANNOTATION</scope>
    <source>
        <strain>cv. Nipponbare</strain>
    </source>
</reference>
<reference key="5">
    <citation type="journal article" date="2005" name="PLoS Biol.">
        <title>The genomes of Oryza sativa: a history of duplications.</title>
        <authorList>
            <person name="Yu J."/>
            <person name="Wang J."/>
            <person name="Lin W."/>
            <person name="Li S."/>
            <person name="Li H."/>
            <person name="Zhou J."/>
            <person name="Ni P."/>
            <person name="Dong W."/>
            <person name="Hu S."/>
            <person name="Zeng C."/>
            <person name="Zhang J."/>
            <person name="Zhang Y."/>
            <person name="Li R."/>
            <person name="Xu Z."/>
            <person name="Li S."/>
            <person name="Li X."/>
            <person name="Zheng H."/>
            <person name="Cong L."/>
            <person name="Lin L."/>
            <person name="Yin J."/>
            <person name="Geng J."/>
            <person name="Li G."/>
            <person name="Shi J."/>
            <person name="Liu J."/>
            <person name="Lv H."/>
            <person name="Li J."/>
            <person name="Wang J."/>
            <person name="Deng Y."/>
            <person name="Ran L."/>
            <person name="Shi X."/>
            <person name="Wang X."/>
            <person name="Wu Q."/>
            <person name="Li C."/>
            <person name="Ren X."/>
            <person name="Wang J."/>
            <person name="Wang X."/>
            <person name="Li D."/>
            <person name="Liu D."/>
            <person name="Zhang X."/>
            <person name="Ji Z."/>
            <person name="Zhao W."/>
            <person name="Sun Y."/>
            <person name="Zhang Z."/>
            <person name="Bao J."/>
            <person name="Han Y."/>
            <person name="Dong L."/>
            <person name="Ji J."/>
            <person name="Chen P."/>
            <person name="Wu S."/>
            <person name="Liu J."/>
            <person name="Xiao Y."/>
            <person name="Bu D."/>
            <person name="Tan J."/>
            <person name="Yang L."/>
            <person name="Ye C."/>
            <person name="Zhang J."/>
            <person name="Xu J."/>
            <person name="Zhou Y."/>
            <person name="Yu Y."/>
            <person name="Zhang B."/>
            <person name="Zhuang S."/>
            <person name="Wei H."/>
            <person name="Liu B."/>
            <person name="Lei M."/>
            <person name="Yu H."/>
            <person name="Li Y."/>
            <person name="Xu H."/>
            <person name="Wei S."/>
            <person name="He X."/>
            <person name="Fang L."/>
            <person name="Zhang Z."/>
            <person name="Zhang Y."/>
            <person name="Huang X."/>
            <person name="Su Z."/>
            <person name="Tong W."/>
            <person name="Li J."/>
            <person name="Tong Z."/>
            <person name="Li S."/>
            <person name="Ye J."/>
            <person name="Wang L."/>
            <person name="Fang L."/>
            <person name="Lei T."/>
            <person name="Chen C.-S."/>
            <person name="Chen H.-C."/>
            <person name="Xu Z."/>
            <person name="Li H."/>
            <person name="Huang H."/>
            <person name="Zhang F."/>
            <person name="Xu H."/>
            <person name="Li N."/>
            <person name="Zhao C."/>
            <person name="Li S."/>
            <person name="Dong L."/>
            <person name="Huang Y."/>
            <person name="Li L."/>
            <person name="Xi Y."/>
            <person name="Qi Q."/>
            <person name="Li W."/>
            <person name="Zhang B."/>
            <person name="Hu W."/>
            <person name="Zhang Y."/>
            <person name="Tian X."/>
            <person name="Jiao Y."/>
            <person name="Liang X."/>
            <person name="Jin J."/>
            <person name="Gao L."/>
            <person name="Zheng W."/>
            <person name="Hao B."/>
            <person name="Liu S.-M."/>
            <person name="Wang W."/>
            <person name="Yuan L."/>
            <person name="Cao M."/>
            <person name="McDermott J."/>
            <person name="Samudrala R."/>
            <person name="Wang J."/>
            <person name="Wong G.K.-S."/>
            <person name="Yang H."/>
        </authorList>
    </citation>
    <scope>NUCLEOTIDE SEQUENCE [LARGE SCALE GENOMIC DNA]</scope>
    <source>
        <strain>cv. Nipponbare</strain>
    </source>
</reference>
<reference key="6">
    <citation type="journal article" date="2003" name="Science">
        <title>Collection, mapping, and annotation of over 28,000 cDNA clones from japonica rice.</title>
        <authorList>
            <consortium name="The rice full-length cDNA consortium"/>
        </authorList>
    </citation>
    <scope>NUCLEOTIDE SEQUENCE [LARGE SCALE MRNA]</scope>
    <source>
        <strain>cv. Nipponbare</strain>
    </source>
</reference>
<organism>
    <name type="scientific">Oryza sativa subsp. japonica</name>
    <name type="common">Rice</name>
    <dbReference type="NCBI Taxonomy" id="39947"/>
    <lineage>
        <taxon>Eukaryota</taxon>
        <taxon>Viridiplantae</taxon>
        <taxon>Streptophyta</taxon>
        <taxon>Embryophyta</taxon>
        <taxon>Tracheophyta</taxon>
        <taxon>Spermatophyta</taxon>
        <taxon>Magnoliopsida</taxon>
        <taxon>Liliopsida</taxon>
        <taxon>Poales</taxon>
        <taxon>Poaceae</taxon>
        <taxon>BOP clade</taxon>
        <taxon>Oryzoideae</taxon>
        <taxon>Oryzeae</taxon>
        <taxon>Oryzinae</taxon>
        <taxon>Oryza</taxon>
        <taxon>Oryza sativa</taxon>
    </lineage>
</organism>
<name>LAC10_ORYSJ</name>
<keyword id="KW-0052">Apoplast</keyword>
<keyword id="KW-0186">Copper</keyword>
<keyword id="KW-0325">Glycoprotein</keyword>
<keyword id="KW-0439">Lignin degradation</keyword>
<keyword id="KW-0479">Metal-binding</keyword>
<keyword id="KW-0560">Oxidoreductase</keyword>
<keyword id="KW-1185">Reference proteome</keyword>
<keyword id="KW-0677">Repeat</keyword>
<keyword id="KW-0964">Secreted</keyword>
<keyword id="KW-0732">Signal</keyword>
<sequence>MGARCLALLLLYGTLLLLLLLPQLPLAGAATRYYTFNVKLQNVTRLCNTRAIPTVNGKFPGPKIVTREGDRVVVKVVNNIKDNITIHWHGVRQMRTGWSDGPAYVTQCPIQTGQSYVYNFTINGQRGTLFWHAHVSWLRSTLYGPIIILPKAGLPLPFTEPHKDVPIIFGEWFNADPEAIVAQALQTGGGPNVSDAYTINGLPGPLYNCSSKDTFRLKVQPGKMYLLRLINAALNDELFFSVANHTLTVVDVDASYVKPFDTDVVLITPGQTTNVLLRAKPTAEAAGATHLMMARPYATGRPGTYDNTTVAAVLEYAPPGHIKSLPLLRPSLPALNDTAFAAGFAAKLRSLACPDYPSNVPRRVDKPFFFAVGLGTTPCPGSNNQTCQGPTNTTKFTASINNVSFDMPTTALLQAHYTGQSAGVYTADFPASPLEPFNYTGTPPNNTNVSNGTRVVVLPYNASVEVVLQDTSILGAESHPLHLHGFDFFVVGQGTGNYDPSKHPAEFNLVDPVQRNTVGVPAGGWVAIRFFADNPGVWFMHCHLEVHTTWGLKMAWVVNDGPLPEQKLMPPPSDLPMC</sequence>
<evidence type="ECO:0000250" key="1"/>
<evidence type="ECO:0000255" key="2"/>
<evidence type="ECO:0000305" key="3"/>
<evidence type="ECO:0000312" key="4">
    <source>
        <dbReference type="EMBL" id="EEE58784.1"/>
    </source>
</evidence>
<accession>Q10ND7</accession>
<accession>A3AGI9</accession>
<accession>B7E555</accession>
<proteinExistence type="evidence at transcript level"/>